<accession>P10936</accession>
<proteinExistence type="evidence at transcript level"/>
<reference key="1">
    <citation type="journal article" date="1989" name="Oncogene Res.">
        <title>The yes proto-oncogene is present in amphibians and contributes to the maternal RNA pool in the oocyte.</title>
        <authorList>
            <person name="Steele R.E."/>
            <person name="Irwin M.Y."/>
            <person name="Knudsen C.L."/>
            <person name="Collett J.W."/>
            <person name="Fero J.B."/>
        </authorList>
    </citation>
    <scope>NUCLEOTIDE SEQUENCE [MRNA]</scope>
</reference>
<dbReference type="EC" id="2.7.10.2"/>
<dbReference type="EMBL" id="X14377">
    <property type="protein sequence ID" value="CAA32551.1"/>
    <property type="molecule type" value="mRNA"/>
</dbReference>
<dbReference type="PIR" id="A45501">
    <property type="entry name" value="A45501"/>
</dbReference>
<dbReference type="SMR" id="P10936"/>
<dbReference type="AGR" id="Xenbase:XB-GENE-866413"/>
<dbReference type="Xenbase" id="XB-GENE-866413">
    <property type="gene designation" value="yes1.L"/>
</dbReference>
<dbReference type="BRENDA" id="2.7.10.2">
    <property type="organism ID" value="6725"/>
</dbReference>
<dbReference type="Proteomes" id="UP000186698">
    <property type="component" value="Unplaced"/>
</dbReference>
<dbReference type="GO" id="GO:0070161">
    <property type="term" value="C:anchoring junction"/>
    <property type="evidence" value="ECO:0007669"/>
    <property type="project" value="UniProtKB-SubCell"/>
</dbReference>
<dbReference type="GO" id="GO:0005813">
    <property type="term" value="C:centrosome"/>
    <property type="evidence" value="ECO:0007669"/>
    <property type="project" value="UniProtKB-SubCell"/>
</dbReference>
<dbReference type="GO" id="GO:0005829">
    <property type="term" value="C:cytosol"/>
    <property type="evidence" value="ECO:0007669"/>
    <property type="project" value="UniProtKB-SubCell"/>
</dbReference>
<dbReference type="GO" id="GO:0005886">
    <property type="term" value="C:plasma membrane"/>
    <property type="evidence" value="ECO:0000318"/>
    <property type="project" value="GO_Central"/>
</dbReference>
<dbReference type="GO" id="GO:0005524">
    <property type="term" value="F:ATP binding"/>
    <property type="evidence" value="ECO:0007669"/>
    <property type="project" value="UniProtKB-KW"/>
</dbReference>
<dbReference type="GO" id="GO:0004715">
    <property type="term" value="F:non-membrane spanning protein tyrosine kinase activity"/>
    <property type="evidence" value="ECO:0000318"/>
    <property type="project" value="GO_Central"/>
</dbReference>
<dbReference type="GO" id="GO:0005102">
    <property type="term" value="F:signaling receptor binding"/>
    <property type="evidence" value="ECO:0000318"/>
    <property type="project" value="GO_Central"/>
</dbReference>
<dbReference type="GO" id="GO:0030154">
    <property type="term" value="P:cell differentiation"/>
    <property type="evidence" value="ECO:0000318"/>
    <property type="project" value="GO_Central"/>
</dbReference>
<dbReference type="GO" id="GO:0007169">
    <property type="term" value="P:cell surface receptor protein tyrosine kinase signaling pathway"/>
    <property type="evidence" value="ECO:0000318"/>
    <property type="project" value="GO_Central"/>
</dbReference>
<dbReference type="CDD" id="cd09933">
    <property type="entry name" value="SH2_Src_family"/>
    <property type="match status" value="1"/>
</dbReference>
<dbReference type="CDD" id="cd12007">
    <property type="entry name" value="SH3_Yes"/>
    <property type="match status" value="1"/>
</dbReference>
<dbReference type="FunFam" id="1.10.510.10:FF:000553">
    <property type="entry name" value="Tyrosine-protein kinase"/>
    <property type="match status" value="1"/>
</dbReference>
<dbReference type="FunFam" id="2.30.30.40:FF:000022">
    <property type="entry name" value="Tyrosine-protein kinase"/>
    <property type="match status" value="1"/>
</dbReference>
<dbReference type="FunFam" id="3.30.200.20:FF:000016">
    <property type="entry name" value="Tyrosine-protein kinase"/>
    <property type="match status" value="1"/>
</dbReference>
<dbReference type="FunFam" id="3.30.505.10:FF:000001">
    <property type="entry name" value="Tyrosine-protein kinase"/>
    <property type="match status" value="1"/>
</dbReference>
<dbReference type="Gene3D" id="3.30.200.20">
    <property type="entry name" value="Phosphorylase Kinase, domain 1"/>
    <property type="match status" value="1"/>
</dbReference>
<dbReference type="Gene3D" id="3.30.505.10">
    <property type="entry name" value="SH2 domain"/>
    <property type="match status" value="1"/>
</dbReference>
<dbReference type="Gene3D" id="2.30.30.40">
    <property type="entry name" value="SH3 Domains"/>
    <property type="match status" value="1"/>
</dbReference>
<dbReference type="Gene3D" id="1.10.510.10">
    <property type="entry name" value="Transferase(Phosphotransferase) domain 1"/>
    <property type="match status" value="1"/>
</dbReference>
<dbReference type="InterPro" id="IPR011009">
    <property type="entry name" value="Kinase-like_dom_sf"/>
</dbReference>
<dbReference type="InterPro" id="IPR050198">
    <property type="entry name" value="Non-receptor_tyrosine_kinases"/>
</dbReference>
<dbReference type="InterPro" id="IPR000719">
    <property type="entry name" value="Prot_kinase_dom"/>
</dbReference>
<dbReference type="InterPro" id="IPR017441">
    <property type="entry name" value="Protein_kinase_ATP_BS"/>
</dbReference>
<dbReference type="InterPro" id="IPR001245">
    <property type="entry name" value="Ser-Thr/Tyr_kinase_cat_dom"/>
</dbReference>
<dbReference type="InterPro" id="IPR000980">
    <property type="entry name" value="SH2"/>
</dbReference>
<dbReference type="InterPro" id="IPR036860">
    <property type="entry name" value="SH2_dom_sf"/>
</dbReference>
<dbReference type="InterPro" id="IPR036028">
    <property type="entry name" value="SH3-like_dom_sf"/>
</dbReference>
<dbReference type="InterPro" id="IPR001452">
    <property type="entry name" value="SH3_domain"/>
</dbReference>
<dbReference type="InterPro" id="IPR008266">
    <property type="entry name" value="Tyr_kinase_AS"/>
</dbReference>
<dbReference type="InterPro" id="IPR020635">
    <property type="entry name" value="Tyr_kinase_cat_dom"/>
</dbReference>
<dbReference type="InterPro" id="IPR035751">
    <property type="entry name" value="Yes_SH3"/>
</dbReference>
<dbReference type="PANTHER" id="PTHR24418">
    <property type="entry name" value="TYROSINE-PROTEIN KINASE"/>
    <property type="match status" value="1"/>
</dbReference>
<dbReference type="Pfam" id="PF07714">
    <property type="entry name" value="PK_Tyr_Ser-Thr"/>
    <property type="match status" value="1"/>
</dbReference>
<dbReference type="Pfam" id="PF00017">
    <property type="entry name" value="SH2"/>
    <property type="match status" value="1"/>
</dbReference>
<dbReference type="Pfam" id="PF00018">
    <property type="entry name" value="SH3_1"/>
    <property type="match status" value="1"/>
</dbReference>
<dbReference type="PRINTS" id="PR00401">
    <property type="entry name" value="SH2DOMAIN"/>
</dbReference>
<dbReference type="PRINTS" id="PR00452">
    <property type="entry name" value="SH3DOMAIN"/>
</dbReference>
<dbReference type="PRINTS" id="PR00109">
    <property type="entry name" value="TYRKINASE"/>
</dbReference>
<dbReference type="SMART" id="SM00252">
    <property type="entry name" value="SH2"/>
    <property type="match status" value="1"/>
</dbReference>
<dbReference type="SMART" id="SM00326">
    <property type="entry name" value="SH3"/>
    <property type="match status" value="1"/>
</dbReference>
<dbReference type="SMART" id="SM00219">
    <property type="entry name" value="TyrKc"/>
    <property type="match status" value="1"/>
</dbReference>
<dbReference type="SUPFAM" id="SSF56112">
    <property type="entry name" value="Protein kinase-like (PK-like)"/>
    <property type="match status" value="1"/>
</dbReference>
<dbReference type="SUPFAM" id="SSF55550">
    <property type="entry name" value="SH2 domain"/>
    <property type="match status" value="1"/>
</dbReference>
<dbReference type="SUPFAM" id="SSF50044">
    <property type="entry name" value="SH3-domain"/>
    <property type="match status" value="1"/>
</dbReference>
<dbReference type="PROSITE" id="PS00107">
    <property type="entry name" value="PROTEIN_KINASE_ATP"/>
    <property type="match status" value="1"/>
</dbReference>
<dbReference type="PROSITE" id="PS50011">
    <property type="entry name" value="PROTEIN_KINASE_DOM"/>
    <property type="match status" value="1"/>
</dbReference>
<dbReference type="PROSITE" id="PS00109">
    <property type="entry name" value="PROTEIN_KINASE_TYR"/>
    <property type="match status" value="1"/>
</dbReference>
<dbReference type="PROSITE" id="PS50001">
    <property type="entry name" value="SH2"/>
    <property type="match status" value="1"/>
</dbReference>
<dbReference type="PROSITE" id="PS50002">
    <property type="entry name" value="SH3"/>
    <property type="match status" value="1"/>
</dbReference>
<feature type="initiator methionine" description="Removed" evidence="1">
    <location>
        <position position="1"/>
    </location>
</feature>
<feature type="chain" id="PRO_0000088184" description="Tyrosine-protein kinase Yes">
    <location>
        <begin position="2"/>
        <end position="537"/>
    </location>
</feature>
<feature type="domain" description="SH3" evidence="6">
    <location>
        <begin position="85"/>
        <end position="146"/>
    </location>
</feature>
<feature type="domain" description="SH2" evidence="5">
    <location>
        <begin position="152"/>
        <end position="249"/>
    </location>
</feature>
<feature type="domain" description="Protein kinase" evidence="4">
    <location>
        <begin position="271"/>
        <end position="524"/>
    </location>
</feature>
<feature type="region of interest" description="Disordered" evidence="8">
    <location>
        <begin position="1"/>
        <end position="60"/>
    </location>
</feature>
<feature type="compositionally biased region" description="Basic and acidic residues" evidence="8">
    <location>
        <begin position="1"/>
        <end position="22"/>
    </location>
</feature>
<feature type="active site" description="Proton acceptor" evidence="4 7">
    <location>
        <position position="390"/>
    </location>
</feature>
<feature type="binding site" evidence="4">
    <location>
        <begin position="277"/>
        <end position="285"/>
    </location>
    <ligand>
        <name>ATP</name>
        <dbReference type="ChEBI" id="CHEBI:30616"/>
    </ligand>
</feature>
<feature type="binding site" evidence="4">
    <location>
        <position position="299"/>
    </location>
    <ligand>
        <name>ATP</name>
        <dbReference type="ChEBI" id="CHEBI:30616"/>
    </ligand>
</feature>
<feature type="modified residue" description="Phosphotyrosine; by autocatalysis" evidence="2">
    <location>
        <position position="420"/>
    </location>
</feature>
<feature type="modified residue" description="Phosphotyrosine; by CSK" evidence="1">
    <location>
        <position position="531"/>
    </location>
</feature>
<feature type="lipid moiety-binding region" description="N-myristoyl glycine" evidence="1">
    <location>
        <position position="2"/>
    </location>
</feature>
<feature type="lipid moiety-binding region" description="S-palmitoyl cysteine; in membrane form" evidence="1">
    <location>
        <position position="3"/>
    </location>
</feature>
<comment type="function">
    <text evidence="1">Non-receptor protein tyrosine kinase that is involved in the regulation of cell growth and survival, apoptosis, cell-cell adhesion, cytoskeleton remodeling, differentiation, G2/M progression and cytokinesis.</text>
</comment>
<comment type="catalytic activity">
    <reaction evidence="7">
        <text>L-tyrosyl-[protein] + ATP = O-phospho-L-tyrosyl-[protein] + ADP + H(+)</text>
        <dbReference type="Rhea" id="RHEA:10596"/>
        <dbReference type="Rhea" id="RHEA-COMP:10136"/>
        <dbReference type="Rhea" id="RHEA-COMP:20101"/>
        <dbReference type="ChEBI" id="CHEBI:15378"/>
        <dbReference type="ChEBI" id="CHEBI:30616"/>
        <dbReference type="ChEBI" id="CHEBI:46858"/>
        <dbReference type="ChEBI" id="CHEBI:61978"/>
        <dbReference type="ChEBI" id="CHEBI:456216"/>
        <dbReference type="EC" id="2.7.10.2"/>
    </reaction>
</comment>
<comment type="subcellular location">
    <subcellularLocation>
        <location evidence="1">Cell membrane</location>
    </subcellularLocation>
    <subcellularLocation>
        <location evidence="1">Cytoplasm</location>
        <location evidence="1">Cytoskeleton</location>
        <location evidence="1">Microtubule organizing center</location>
        <location evidence="1">Centrosome</location>
    </subcellularLocation>
    <subcellularLocation>
        <location evidence="1">Cytoplasm</location>
        <location evidence="1">Cytosol</location>
    </subcellularLocation>
    <subcellularLocation>
        <location evidence="3">Cell junction</location>
    </subcellularLocation>
</comment>
<comment type="PTM">
    <text evidence="2">Autophosphorylated at Tyr-420 inducing activation.</text>
</comment>
<comment type="PTM">
    <text evidence="1">Palmitoylation at Cys-3 promotes membrane localization.</text>
</comment>
<comment type="similarity">
    <text evidence="4">Belongs to the protein kinase superfamily. Tyr protein kinase family. SRC subfamily.</text>
</comment>
<evidence type="ECO:0000250" key="1"/>
<evidence type="ECO:0000250" key="2">
    <source>
        <dbReference type="UniProtKB" id="P07947"/>
    </source>
</evidence>
<evidence type="ECO:0000250" key="3">
    <source>
        <dbReference type="UniProtKB" id="Q28923"/>
    </source>
</evidence>
<evidence type="ECO:0000255" key="4">
    <source>
        <dbReference type="PROSITE-ProRule" id="PRU00159"/>
    </source>
</evidence>
<evidence type="ECO:0000255" key="5">
    <source>
        <dbReference type="PROSITE-ProRule" id="PRU00191"/>
    </source>
</evidence>
<evidence type="ECO:0000255" key="6">
    <source>
        <dbReference type="PROSITE-ProRule" id="PRU00192"/>
    </source>
</evidence>
<evidence type="ECO:0000255" key="7">
    <source>
        <dbReference type="PROSITE-ProRule" id="PRU10028"/>
    </source>
</evidence>
<evidence type="ECO:0000256" key="8">
    <source>
        <dbReference type="SAM" id="MobiDB-lite"/>
    </source>
</evidence>
<sequence length="537" mass="60358">MGCIKSKEDKGPSIKYRTEPKPDPGSQYGADPTQATQSPGIKGPAPNFNSHSMTPFGGSSGITPFGGASSIFSPTPVPYPGGLTGGVTVFVALYDYEARTTEDLSFRKGERFQIINNTEGDWWEARSIATGKTGYIPSNYVAPADSIQAEEWYFGKMGRKDAERLLLNPGNQRGTFLVRESETTKGAYSLSIRDWDEVRGDNVKHYKIRKLDNGGYYITTRAQFESLQKLVKHYSEHADGLCYRLTTVCPSVKPQTQGLAKDAWEIPRESLRLDVKLGQGCFGEVWIGTWNGTTKVAIKTLKPGTMMPEAFLQEAQIMKKLRHDKLVPLYAVVSEEPIYIVTEYMIKGSLLDFLKEGNGKYLKLPQLVDMAAQIADGMAYIERMNYIHRDLRAANILVGDNLVCKIADFGLARLIEDNEYTARQGAKFPIKWTAPEAALYGRFTIKSDVWSFGILLTELVAKGRVPYPGMVNREVLEQVERGYRMPCPQRCPESLHELMKLCWKKDPDERPTFEYIQSFLEDYFTATEPQYQPGDNL</sequence>
<gene>
    <name type="primary">yes1</name>
    <name type="synonym">yes</name>
</gene>
<organism>
    <name type="scientific">Xenopus laevis</name>
    <name type="common">African clawed frog</name>
    <dbReference type="NCBI Taxonomy" id="8355"/>
    <lineage>
        <taxon>Eukaryota</taxon>
        <taxon>Metazoa</taxon>
        <taxon>Chordata</taxon>
        <taxon>Craniata</taxon>
        <taxon>Vertebrata</taxon>
        <taxon>Euteleostomi</taxon>
        <taxon>Amphibia</taxon>
        <taxon>Batrachia</taxon>
        <taxon>Anura</taxon>
        <taxon>Pipoidea</taxon>
        <taxon>Pipidae</taxon>
        <taxon>Xenopodinae</taxon>
        <taxon>Xenopus</taxon>
        <taxon>Xenopus</taxon>
    </lineage>
</organism>
<keyword id="KW-0067">ATP-binding</keyword>
<keyword id="KW-0965">Cell junction</keyword>
<keyword id="KW-1003">Cell membrane</keyword>
<keyword id="KW-0963">Cytoplasm</keyword>
<keyword id="KW-0206">Cytoskeleton</keyword>
<keyword id="KW-0418">Kinase</keyword>
<keyword id="KW-0449">Lipoprotein</keyword>
<keyword id="KW-0472">Membrane</keyword>
<keyword id="KW-0519">Myristate</keyword>
<keyword id="KW-0547">Nucleotide-binding</keyword>
<keyword id="KW-0564">Palmitate</keyword>
<keyword id="KW-0597">Phosphoprotein</keyword>
<keyword id="KW-1185">Reference proteome</keyword>
<keyword id="KW-0727">SH2 domain</keyword>
<keyword id="KW-0728">SH3 domain</keyword>
<keyword id="KW-0808">Transferase</keyword>
<keyword id="KW-0829">Tyrosine-protein kinase</keyword>
<name>YES_XENLA</name>
<protein>
    <recommendedName>
        <fullName>Tyrosine-protein kinase Yes</fullName>
        <ecNumber>2.7.10.2</ecNumber>
    </recommendedName>
    <alternativeName>
        <fullName>p61-Yes</fullName>
    </alternativeName>
</protein>